<organism>
    <name type="scientific">Pinus contorta</name>
    <name type="common">Shore pine</name>
    <name type="synonym">Lodgepole pine</name>
    <dbReference type="NCBI Taxonomy" id="3339"/>
    <lineage>
        <taxon>Eukaryota</taxon>
        <taxon>Viridiplantae</taxon>
        <taxon>Streptophyta</taxon>
        <taxon>Embryophyta</taxon>
        <taxon>Tracheophyta</taxon>
        <taxon>Spermatophyta</taxon>
        <taxon>Pinopsida</taxon>
        <taxon>Pinidae</taxon>
        <taxon>Conifers I</taxon>
        <taxon>Pinales</taxon>
        <taxon>Pinaceae</taxon>
        <taxon>Pinus</taxon>
        <taxon>Pinus subgen. Pinus</taxon>
    </lineage>
</organism>
<reference key="1">
    <citation type="journal article" date="2013" name="BMC Plant Biol.">
        <title>Transcriptome resources and functional characterization of monoterpene synthases for two host species of the mountain pine beetle, lodgepole pine (Pinus contorta) and jack pine (Pinus banksiana).</title>
        <authorList>
            <person name="Hall D.E."/>
            <person name="Yuen M.M.S."/>
            <person name="Jancsik S."/>
            <person name="Quesada A.L."/>
            <person name="Dullat H.K."/>
            <person name="Li M."/>
            <person name="Henderson H."/>
            <person name="Arango-Velez A."/>
            <person name="Liao N.Y."/>
            <person name="Docking R.T."/>
            <person name="Chan S.K."/>
            <person name="Cooke J.E.K."/>
            <person name="Breuil C."/>
            <person name="Jones S.J.M."/>
            <person name="Keeling C.I."/>
            <person name="Bohlmann J."/>
        </authorList>
    </citation>
    <scope>NUCLEOTIDE SEQUENCE [MRNA]</scope>
    <scope>FUNCTION</scope>
    <scope>CATALYTIC ACTIVITY</scope>
    <scope>PATHWAY</scope>
</reference>
<accession>R9QMR4</accession>
<protein>
    <recommendedName>
        <fullName evidence="5">(-)-beta-phellandrene synthase 1, chloroplastic</fullName>
        <ecNumber evidence="4">4.2.3.52</ecNumber>
    </recommendedName>
    <alternativeName>
        <fullName evidence="5">Terpene synthase (-)betaphell1</fullName>
        <shortName evidence="5">PcTPS-(-)betaphell1</shortName>
    </alternativeName>
</protein>
<gene>
    <name evidence="5" type="primary">TPS-(-)Bphell1</name>
</gene>
<feature type="transit peptide" description="Chloroplast" evidence="3">
    <location>
        <begin position="1"/>
        <end position="49"/>
    </location>
</feature>
<feature type="chain" id="PRO_0000455015" description="(-)-beta-phellandrene synthase 1, chloroplastic">
    <location>
        <begin position="50"/>
        <end position="621"/>
    </location>
</feature>
<feature type="short sequence motif" description="DDXXD motif" evidence="6">
    <location>
        <begin position="372"/>
        <end position="376"/>
    </location>
</feature>
<feature type="binding site" evidence="2">
    <location>
        <position position="372"/>
    </location>
    <ligand>
        <name>Mg(2+)</name>
        <dbReference type="ChEBI" id="CHEBI:18420"/>
        <label>1</label>
    </ligand>
</feature>
<feature type="binding site" evidence="2">
    <location>
        <position position="372"/>
    </location>
    <ligand>
        <name>Mg(2+)</name>
        <dbReference type="ChEBI" id="CHEBI:18420"/>
        <label>2</label>
    </ligand>
</feature>
<feature type="binding site" evidence="2">
    <location>
        <position position="376"/>
    </location>
    <ligand>
        <name>Mg(2+)</name>
        <dbReference type="ChEBI" id="CHEBI:18420"/>
        <label>1</label>
    </ligand>
</feature>
<feature type="binding site" evidence="2">
    <location>
        <position position="376"/>
    </location>
    <ligand>
        <name>Mg(2+)</name>
        <dbReference type="ChEBI" id="CHEBI:18420"/>
        <label>2</label>
    </ligand>
</feature>
<feature type="binding site" evidence="2">
    <location>
        <position position="524"/>
    </location>
    <ligand>
        <name>Mg(2+)</name>
        <dbReference type="ChEBI" id="CHEBI:18420"/>
        <label>3</label>
    </ligand>
</feature>
<name>BPHL1_PINCO</name>
<sequence>MALALVSVAPLVSMRRSLFSSPYELKSIDKTIPNLVMCRKRMSGTPSIRVSSTTSASNDDGVRRRVGDYRYNHWDDDLIDSLATSYEAPSYLERADTLVEAIKDRFNSMGVDDGERMSPLTDLYQRLWMVDSVERLGIDRHFQNEIKSALDYVFSYWKEKGIGRGRQSAVTDLNSTALGLRTLRLHGYPVSSDVLENFKDHNGQFTCSGIQTEGEIRGVLNLFRASLIAFPGEKVMEEAEIFSTMYLKHALQKIAVSSLSQEIEYLLEYGWHTNPPRLEARMYMEVFPQDTIYEQKLVELAKVEFNIFHSLQKRELQSLTRWWKHYGFPQLSFTRHIHVEYYTFGSCIATDPKQSAFRLCFAKMSYFVTVLDDIYDTYGTMEELELFTAAIKRWDPSVVDCLPEYMKGVYMAVYDTVNEMAKEAEKVQGRDTLNYVRQAWELYIDAYMPEAKWISSGYLPTFQEYLDNSKISFGTRITILQPILTLGEPLPHEILQEIDFPAKFNDLISVILRLKGDTRCYKADRARGEEASSVSCYMKDNAGITEEDAVHCINDMVNNLLKELNWELLKPDSNVPISCRKAAFDICRIFHHGYKYRDGYGDATIEVKNLVKRTVLEPVPL</sequence>
<dbReference type="EC" id="4.2.3.52" evidence="4"/>
<dbReference type="EMBL" id="JQ240301">
    <property type="protein sequence ID" value="AFU73853.1"/>
    <property type="molecule type" value="mRNA"/>
</dbReference>
<dbReference type="SMR" id="R9QMR4"/>
<dbReference type="UniPathway" id="UPA00213"/>
<dbReference type="UniPathway" id="UPA00924"/>
<dbReference type="GO" id="GO:0009507">
    <property type="term" value="C:chloroplast"/>
    <property type="evidence" value="ECO:0007669"/>
    <property type="project" value="UniProtKB-SubCell"/>
</dbReference>
<dbReference type="GO" id="GO:0000287">
    <property type="term" value="F:magnesium ion binding"/>
    <property type="evidence" value="ECO:0007669"/>
    <property type="project" value="InterPro"/>
</dbReference>
<dbReference type="GO" id="GO:0010333">
    <property type="term" value="F:terpene synthase activity"/>
    <property type="evidence" value="ECO:0000314"/>
    <property type="project" value="UniProtKB"/>
</dbReference>
<dbReference type="GO" id="GO:0016102">
    <property type="term" value="P:diterpenoid biosynthetic process"/>
    <property type="evidence" value="ECO:0007669"/>
    <property type="project" value="InterPro"/>
</dbReference>
<dbReference type="GO" id="GO:0010597">
    <property type="term" value="P:green leaf volatile biosynthetic process"/>
    <property type="evidence" value="ECO:0000314"/>
    <property type="project" value="UniProtKB"/>
</dbReference>
<dbReference type="GO" id="GO:0016114">
    <property type="term" value="P:terpenoid biosynthetic process"/>
    <property type="evidence" value="ECO:0000314"/>
    <property type="project" value="UniProtKB"/>
</dbReference>
<dbReference type="CDD" id="cd00684">
    <property type="entry name" value="Terpene_cyclase_plant_C1"/>
    <property type="match status" value="1"/>
</dbReference>
<dbReference type="FunFam" id="1.50.10.130:FF:000002">
    <property type="entry name" value="Ent-copalyl diphosphate synthase, chloroplastic"/>
    <property type="match status" value="1"/>
</dbReference>
<dbReference type="FunFam" id="1.10.600.10:FF:000005">
    <property type="entry name" value="Ent-kaur-16-ene synthase, chloroplastic"/>
    <property type="match status" value="1"/>
</dbReference>
<dbReference type="Gene3D" id="1.10.600.10">
    <property type="entry name" value="Farnesyl Diphosphate Synthase"/>
    <property type="match status" value="1"/>
</dbReference>
<dbReference type="Gene3D" id="1.50.10.130">
    <property type="entry name" value="Terpene synthase, N-terminal domain"/>
    <property type="match status" value="1"/>
</dbReference>
<dbReference type="InterPro" id="IPR008949">
    <property type="entry name" value="Isoprenoid_synthase_dom_sf"/>
</dbReference>
<dbReference type="InterPro" id="IPR034741">
    <property type="entry name" value="Terpene_cyclase-like_1_C"/>
</dbReference>
<dbReference type="InterPro" id="IPR044814">
    <property type="entry name" value="Terpene_cyclase_plant_C1"/>
</dbReference>
<dbReference type="InterPro" id="IPR001906">
    <property type="entry name" value="Terpene_synth_N"/>
</dbReference>
<dbReference type="InterPro" id="IPR036965">
    <property type="entry name" value="Terpene_synth_N_sf"/>
</dbReference>
<dbReference type="InterPro" id="IPR050148">
    <property type="entry name" value="Terpene_synthase-like"/>
</dbReference>
<dbReference type="InterPro" id="IPR005630">
    <property type="entry name" value="Terpene_synthase_metal-bd"/>
</dbReference>
<dbReference type="InterPro" id="IPR008930">
    <property type="entry name" value="Terpenoid_cyclase/PrenylTrfase"/>
</dbReference>
<dbReference type="PANTHER" id="PTHR31739:SF25">
    <property type="entry name" value="(E,E)-GERANYLLINALOOL SYNTHASE"/>
    <property type="match status" value="1"/>
</dbReference>
<dbReference type="PANTHER" id="PTHR31739">
    <property type="entry name" value="ENT-COPALYL DIPHOSPHATE SYNTHASE, CHLOROPLASTIC"/>
    <property type="match status" value="1"/>
</dbReference>
<dbReference type="Pfam" id="PF01397">
    <property type="entry name" value="Terpene_synth"/>
    <property type="match status" value="1"/>
</dbReference>
<dbReference type="Pfam" id="PF03936">
    <property type="entry name" value="Terpene_synth_C"/>
    <property type="match status" value="1"/>
</dbReference>
<dbReference type="SFLD" id="SFLDS00005">
    <property type="entry name" value="Isoprenoid_Synthase_Type_I"/>
    <property type="match status" value="1"/>
</dbReference>
<dbReference type="SFLD" id="SFLDG01019">
    <property type="entry name" value="Terpene_Cyclase_Like_1_C_Termi"/>
    <property type="match status" value="1"/>
</dbReference>
<dbReference type="SFLD" id="SFLDG01014">
    <property type="entry name" value="Terpene_Cyclase_Like_1_N-term"/>
    <property type="match status" value="1"/>
</dbReference>
<dbReference type="SUPFAM" id="SSF48239">
    <property type="entry name" value="Terpenoid cyclases/Protein prenyltransferases"/>
    <property type="match status" value="1"/>
</dbReference>
<dbReference type="SUPFAM" id="SSF48576">
    <property type="entry name" value="Terpenoid synthases"/>
    <property type="match status" value="1"/>
</dbReference>
<comment type="function">
    <text evidence="4">Monoterpene synthase (TPS) involved in the biosynthesis of monoterpene natural products included in conifer oleoresin secretions and volatile emissions; these compounds contribute to biotic and abiotic stress defense against herbivores and pathogens (PubMed:23679205). Catalyzes the conversion of (2E)-geranyl diphosphate (GPP) to (-)-beta-phellandrene and, to a lower extent, to (-)-alpha-phellandrene (PubMed:23679205).</text>
</comment>
<comment type="catalytic activity">
    <reaction evidence="4">
        <text>(2E)-geranyl diphosphate = (-)-beta-phellandrene + diphosphate</text>
        <dbReference type="Rhea" id="RHEA:25492"/>
        <dbReference type="ChEBI" id="CHEBI:129"/>
        <dbReference type="ChEBI" id="CHEBI:33019"/>
        <dbReference type="ChEBI" id="CHEBI:58057"/>
        <dbReference type="EC" id="4.2.3.52"/>
    </reaction>
    <physiologicalReaction direction="left-to-right" evidence="4">
        <dbReference type="Rhea" id="RHEA:25493"/>
    </physiologicalReaction>
</comment>
<comment type="cofactor">
    <cofactor evidence="1">
        <name>Mg(2+)</name>
        <dbReference type="ChEBI" id="CHEBI:18420"/>
    </cofactor>
    <cofactor evidence="1">
        <name>Mn(2+)</name>
        <dbReference type="ChEBI" id="CHEBI:29035"/>
    </cofactor>
    <text evidence="1">Binds 3 Mg(2+) or Mn(2+) ions per subunit.</text>
</comment>
<comment type="pathway">
    <text evidence="4">Terpene metabolism; oleoresin biosynthesis.</text>
</comment>
<comment type="pathway">
    <text evidence="4">Secondary metabolite biosynthesis; terpenoid biosynthesis.</text>
</comment>
<comment type="subcellular location">
    <subcellularLocation>
        <location evidence="3">Plastid</location>
        <location evidence="3">Chloroplast</location>
    </subcellularLocation>
</comment>
<comment type="domain">
    <text evidence="6">The Asp-Asp-Xaa-Xaa-Asp/Glu (DDXXD/E) motif is important for the catalytic activity, presumably through binding to Mg(2+).</text>
</comment>
<comment type="similarity">
    <text evidence="6">Belongs to the terpene synthase family. Tpsd subfamily.</text>
</comment>
<keyword id="KW-0150">Chloroplast</keyword>
<keyword id="KW-0456">Lyase</keyword>
<keyword id="KW-0460">Magnesium</keyword>
<keyword id="KW-0479">Metal-binding</keyword>
<keyword id="KW-0934">Plastid</keyword>
<keyword id="KW-0809">Transit peptide</keyword>
<proteinExistence type="evidence at protein level"/>
<evidence type="ECO:0000250" key="1">
    <source>
        <dbReference type="UniProtKB" id="A0A1C9J6A7"/>
    </source>
</evidence>
<evidence type="ECO:0000250" key="2">
    <source>
        <dbReference type="UniProtKB" id="Q40577"/>
    </source>
</evidence>
<evidence type="ECO:0000255" key="3"/>
<evidence type="ECO:0000269" key="4">
    <source>
    </source>
</evidence>
<evidence type="ECO:0000303" key="5">
    <source>
    </source>
</evidence>
<evidence type="ECO:0000305" key="6"/>